<sequence length="514" mass="57343">MKPAHAAASWRNPLRDKRDKRLPRIAGPCGMVIFGVTGDLARKKVMPAVYDLANRGLLPPTFSLVGFARRDWSTQDFGQVVYNAVQEHCRTPFRQQNWDRLAEGFRFVPGTFDDDDAFAQLAETLEKLDAERGTGGNHAFYLAIPPKSFPVVCEQLHKSGLARPQGDRWSRVVIEKPFGHDLASARELNKAVNAVFPEEAVFRIDHYLGKETVQNILALRFANQLFDPIWNAHYVDHVQITMAEDIGLGGRAGYYDGIGAARDVIQNHLMQLLALTAMEEPVSFHPAALQAEKIKVLSATRLAEPLDQTTSRGQYAAGWQGGEKVVGLLDEEGFAEDSTTETFAAITLEVDTRRWAGVPFYLRTGKRLGRRVTEIALVFRRAPHLPFDATMTDELGTNAMVIRVQPDEGVTLRFGSKVPGTAMEVRDVNMDFSYGSAFAEDSPEAYERLILDVLLGEPSLFPVNAEVELAWEILDPALEHWAAHGTPDAYEAGTWGPESSLEMLRRTGREWRRP</sequence>
<organism>
    <name type="scientific">Mycobacterium bovis (strain ATCC BAA-935 / AF2122/97)</name>
    <dbReference type="NCBI Taxonomy" id="233413"/>
    <lineage>
        <taxon>Bacteria</taxon>
        <taxon>Bacillati</taxon>
        <taxon>Actinomycetota</taxon>
        <taxon>Actinomycetes</taxon>
        <taxon>Mycobacteriales</taxon>
        <taxon>Mycobacteriaceae</taxon>
        <taxon>Mycobacterium</taxon>
        <taxon>Mycobacterium tuberculosis complex</taxon>
    </lineage>
</organism>
<name>G6PD2_MYCBO</name>
<protein>
    <recommendedName>
        <fullName evidence="1">Glucose-6-phosphate 1-dehydrogenase 2</fullName>
        <shortName evidence="1">G6PD 2</shortName>
        <ecNumber evidence="1">1.1.1.49</ecNumber>
    </recommendedName>
</protein>
<accession>P0A585</accession>
<accession>A0A1R3XYD7</accession>
<accession>O08407</accession>
<accession>X2BID3</accession>
<evidence type="ECO:0000255" key="1">
    <source>
        <dbReference type="HAMAP-Rule" id="MF_00966"/>
    </source>
</evidence>
<proteinExistence type="inferred from homology"/>
<feature type="chain" id="PRO_0000068127" description="Glucose-6-phosphate 1-dehydrogenase 2">
    <location>
        <begin position="1"/>
        <end position="514"/>
    </location>
</feature>
<feature type="active site" description="Proton acceptor" evidence="1">
    <location>
        <position position="268"/>
    </location>
</feature>
<feature type="binding site" evidence="1">
    <location>
        <position position="69"/>
    </location>
    <ligand>
        <name>NADP(+)</name>
        <dbReference type="ChEBI" id="CHEBI:58349"/>
    </ligand>
</feature>
<feature type="binding site" evidence="1">
    <location>
        <position position="176"/>
    </location>
    <ligand>
        <name>NADP(+)</name>
        <dbReference type="ChEBI" id="CHEBI:58349"/>
    </ligand>
</feature>
<feature type="binding site" evidence="1">
    <location>
        <position position="206"/>
    </location>
    <ligand>
        <name>substrate</name>
    </ligand>
</feature>
<feature type="binding site" evidence="1">
    <location>
        <position position="210"/>
    </location>
    <ligand>
        <name>substrate</name>
    </ligand>
</feature>
<feature type="binding site" evidence="1">
    <location>
        <position position="244"/>
    </location>
    <ligand>
        <name>substrate</name>
    </ligand>
</feature>
<feature type="binding site" evidence="1">
    <location>
        <position position="263"/>
    </location>
    <ligand>
        <name>substrate</name>
    </ligand>
</feature>
<feature type="binding site" evidence="1">
    <location>
        <position position="366"/>
    </location>
    <ligand>
        <name>substrate</name>
    </ligand>
</feature>
<keyword id="KW-0119">Carbohydrate metabolism</keyword>
<keyword id="KW-0313">Glucose metabolism</keyword>
<keyword id="KW-0521">NADP</keyword>
<keyword id="KW-0560">Oxidoreductase</keyword>
<keyword id="KW-1185">Reference proteome</keyword>
<dbReference type="EC" id="1.1.1.49" evidence="1"/>
<dbReference type="EMBL" id="LT708304">
    <property type="protein sequence ID" value="SIU00085.1"/>
    <property type="molecule type" value="Genomic_DNA"/>
</dbReference>
<dbReference type="RefSeq" id="NP_855134.1">
    <property type="nucleotide sequence ID" value="NC_002945.3"/>
</dbReference>
<dbReference type="RefSeq" id="WP_003407443.1">
    <property type="nucleotide sequence ID" value="NC_002945.4"/>
</dbReference>
<dbReference type="SMR" id="P0A585"/>
<dbReference type="KEGG" id="mbo:BQ2027_MB1482C"/>
<dbReference type="PATRIC" id="fig|233413.5.peg.1621"/>
<dbReference type="UniPathway" id="UPA00115">
    <property type="reaction ID" value="UER00408"/>
</dbReference>
<dbReference type="Proteomes" id="UP000001419">
    <property type="component" value="Chromosome"/>
</dbReference>
<dbReference type="GO" id="GO:0005829">
    <property type="term" value="C:cytosol"/>
    <property type="evidence" value="ECO:0007669"/>
    <property type="project" value="TreeGrafter"/>
</dbReference>
<dbReference type="GO" id="GO:0004345">
    <property type="term" value="F:glucose-6-phosphate dehydrogenase activity"/>
    <property type="evidence" value="ECO:0007669"/>
    <property type="project" value="UniProtKB-UniRule"/>
</dbReference>
<dbReference type="GO" id="GO:0050661">
    <property type="term" value="F:NADP binding"/>
    <property type="evidence" value="ECO:0007669"/>
    <property type="project" value="UniProtKB-UniRule"/>
</dbReference>
<dbReference type="GO" id="GO:0006006">
    <property type="term" value="P:glucose metabolic process"/>
    <property type="evidence" value="ECO:0007669"/>
    <property type="project" value="UniProtKB-KW"/>
</dbReference>
<dbReference type="GO" id="GO:0009051">
    <property type="term" value="P:pentose-phosphate shunt, oxidative branch"/>
    <property type="evidence" value="ECO:0007669"/>
    <property type="project" value="TreeGrafter"/>
</dbReference>
<dbReference type="FunFam" id="3.30.360.10:FF:000011">
    <property type="entry name" value="Glucose-6-phosphate 1-dehydrogenase"/>
    <property type="match status" value="1"/>
</dbReference>
<dbReference type="Gene3D" id="3.30.360.10">
    <property type="entry name" value="Dihydrodipicolinate Reductase, domain 2"/>
    <property type="match status" value="1"/>
</dbReference>
<dbReference type="Gene3D" id="3.40.50.720">
    <property type="entry name" value="NAD(P)-binding Rossmann-like Domain"/>
    <property type="match status" value="1"/>
</dbReference>
<dbReference type="HAMAP" id="MF_00966">
    <property type="entry name" value="G6PD"/>
    <property type="match status" value="1"/>
</dbReference>
<dbReference type="InterPro" id="IPR001282">
    <property type="entry name" value="G6P_DH"/>
</dbReference>
<dbReference type="InterPro" id="IPR019796">
    <property type="entry name" value="G6P_DH_AS"/>
</dbReference>
<dbReference type="InterPro" id="IPR022675">
    <property type="entry name" value="G6P_DH_C"/>
</dbReference>
<dbReference type="InterPro" id="IPR022674">
    <property type="entry name" value="G6P_DH_NAD-bd"/>
</dbReference>
<dbReference type="InterPro" id="IPR036291">
    <property type="entry name" value="NAD(P)-bd_dom_sf"/>
</dbReference>
<dbReference type="NCBIfam" id="TIGR00871">
    <property type="entry name" value="zwf"/>
    <property type="match status" value="1"/>
</dbReference>
<dbReference type="PANTHER" id="PTHR23429:SF0">
    <property type="entry name" value="GLUCOSE-6-PHOSPHATE 1-DEHYDROGENASE"/>
    <property type="match status" value="1"/>
</dbReference>
<dbReference type="PANTHER" id="PTHR23429">
    <property type="entry name" value="GLUCOSE-6-PHOSPHATE 1-DEHYDROGENASE G6PD"/>
    <property type="match status" value="1"/>
</dbReference>
<dbReference type="Pfam" id="PF02781">
    <property type="entry name" value="G6PD_C"/>
    <property type="match status" value="1"/>
</dbReference>
<dbReference type="Pfam" id="PF00479">
    <property type="entry name" value="G6PD_N"/>
    <property type="match status" value="1"/>
</dbReference>
<dbReference type="PIRSF" id="PIRSF000110">
    <property type="entry name" value="G6PD"/>
    <property type="match status" value="1"/>
</dbReference>
<dbReference type="PRINTS" id="PR00079">
    <property type="entry name" value="G6PDHDRGNASE"/>
</dbReference>
<dbReference type="SUPFAM" id="SSF55347">
    <property type="entry name" value="Glyceraldehyde-3-phosphate dehydrogenase-like, C-terminal domain"/>
    <property type="match status" value="1"/>
</dbReference>
<dbReference type="SUPFAM" id="SSF51735">
    <property type="entry name" value="NAD(P)-binding Rossmann-fold domains"/>
    <property type="match status" value="1"/>
</dbReference>
<dbReference type="PROSITE" id="PS00069">
    <property type="entry name" value="G6P_DEHYDROGENASE"/>
    <property type="match status" value="1"/>
</dbReference>
<gene>
    <name evidence="1" type="primary">zwf2</name>
    <name type="synonym">zwf</name>
    <name type="ordered locus">BQ2027_MB1482C</name>
</gene>
<comment type="function">
    <text evidence="1">Catalyzes the oxidation of glucose 6-phosphate to 6-phosphogluconolactone.</text>
</comment>
<comment type="catalytic activity">
    <reaction evidence="1">
        <text>D-glucose 6-phosphate + NADP(+) = 6-phospho-D-glucono-1,5-lactone + NADPH + H(+)</text>
        <dbReference type="Rhea" id="RHEA:15841"/>
        <dbReference type="ChEBI" id="CHEBI:15378"/>
        <dbReference type="ChEBI" id="CHEBI:57783"/>
        <dbReference type="ChEBI" id="CHEBI:57955"/>
        <dbReference type="ChEBI" id="CHEBI:58349"/>
        <dbReference type="ChEBI" id="CHEBI:61548"/>
        <dbReference type="EC" id="1.1.1.49"/>
    </reaction>
</comment>
<comment type="pathway">
    <text evidence="1">Carbohydrate degradation; pentose phosphate pathway; D-ribulose 5-phosphate from D-glucose 6-phosphate (oxidative stage): step 1/3.</text>
</comment>
<comment type="similarity">
    <text evidence="1">Belongs to the glucose-6-phosphate dehydrogenase family.</text>
</comment>
<reference key="1">
    <citation type="journal article" date="2003" name="Proc. Natl. Acad. Sci. U.S.A.">
        <title>The complete genome sequence of Mycobacterium bovis.</title>
        <authorList>
            <person name="Garnier T."/>
            <person name="Eiglmeier K."/>
            <person name="Camus J.-C."/>
            <person name="Medina N."/>
            <person name="Mansoor H."/>
            <person name="Pryor M."/>
            <person name="Duthoy S."/>
            <person name="Grondin S."/>
            <person name="Lacroix C."/>
            <person name="Monsempe C."/>
            <person name="Simon S."/>
            <person name="Harris B."/>
            <person name="Atkin R."/>
            <person name="Doggett J."/>
            <person name="Mayes R."/>
            <person name="Keating L."/>
            <person name="Wheeler P.R."/>
            <person name="Parkhill J."/>
            <person name="Barrell B.G."/>
            <person name="Cole S.T."/>
            <person name="Gordon S.V."/>
            <person name="Hewinson R.G."/>
        </authorList>
    </citation>
    <scope>NUCLEOTIDE SEQUENCE [LARGE SCALE GENOMIC DNA]</scope>
    <source>
        <strain>ATCC BAA-935 / AF2122/97</strain>
    </source>
</reference>
<reference key="2">
    <citation type="journal article" date="2017" name="Genome Announc.">
        <title>Updated reference genome sequence and annotation of Mycobacterium bovis AF2122/97.</title>
        <authorList>
            <person name="Malone K.M."/>
            <person name="Farrell D."/>
            <person name="Stuber T.P."/>
            <person name="Schubert O.T."/>
            <person name="Aebersold R."/>
            <person name="Robbe-Austerman S."/>
            <person name="Gordon S.V."/>
        </authorList>
    </citation>
    <scope>NUCLEOTIDE SEQUENCE [LARGE SCALE GENOMIC DNA]</scope>
    <scope>GENOME REANNOTATION</scope>
    <source>
        <strain>ATCC BAA-935 / AF2122/97</strain>
    </source>
</reference>